<proteinExistence type="inferred from homology"/>
<gene>
    <name evidence="1" type="primary">kdsA</name>
    <name type="ordered locus">Ecok1_11380</name>
    <name type="ORF">APECO1_332</name>
</gene>
<organism>
    <name type="scientific">Escherichia coli O1:K1 / APEC</name>
    <dbReference type="NCBI Taxonomy" id="405955"/>
    <lineage>
        <taxon>Bacteria</taxon>
        <taxon>Pseudomonadati</taxon>
        <taxon>Pseudomonadota</taxon>
        <taxon>Gammaproteobacteria</taxon>
        <taxon>Enterobacterales</taxon>
        <taxon>Enterobacteriaceae</taxon>
        <taxon>Escherichia</taxon>
    </lineage>
</organism>
<keyword id="KW-0963">Cytoplasm</keyword>
<keyword id="KW-0448">Lipopolysaccharide biosynthesis</keyword>
<keyword id="KW-1185">Reference proteome</keyword>
<keyword id="KW-0808">Transferase</keyword>
<reference key="1">
    <citation type="journal article" date="2007" name="J. Bacteriol.">
        <title>The genome sequence of avian pathogenic Escherichia coli strain O1:K1:H7 shares strong similarities with human extraintestinal pathogenic E. coli genomes.</title>
        <authorList>
            <person name="Johnson T.J."/>
            <person name="Kariyawasam S."/>
            <person name="Wannemuehler Y."/>
            <person name="Mangiamele P."/>
            <person name="Johnson S.J."/>
            <person name="Doetkott C."/>
            <person name="Skyberg J.A."/>
            <person name="Lynne A.M."/>
            <person name="Johnson J.R."/>
            <person name="Nolan L.K."/>
        </authorList>
    </citation>
    <scope>NUCLEOTIDE SEQUENCE [LARGE SCALE GENOMIC DNA]</scope>
</reference>
<feature type="chain" id="PRO_0000304449" description="2-dehydro-3-deoxyphosphooctonate aldolase">
    <location>
        <begin position="1"/>
        <end position="284"/>
    </location>
</feature>
<protein>
    <recommendedName>
        <fullName evidence="1">2-dehydro-3-deoxyphosphooctonate aldolase</fullName>
        <ecNumber evidence="1">2.5.1.55</ecNumber>
    </recommendedName>
    <alternativeName>
        <fullName evidence="1">3-deoxy-D-manno-octulosonic acid 8-phosphate synthase</fullName>
    </alternativeName>
    <alternativeName>
        <fullName evidence="1">KDO-8-phosphate synthase</fullName>
        <shortName evidence="1">KDO 8-P synthase</shortName>
        <shortName evidence="1">KDOPS</shortName>
    </alternativeName>
    <alternativeName>
        <fullName evidence="1">Phospho-2-dehydro-3-deoxyoctonate aldolase</fullName>
    </alternativeName>
</protein>
<evidence type="ECO:0000255" key="1">
    <source>
        <dbReference type="HAMAP-Rule" id="MF_00056"/>
    </source>
</evidence>
<name>KDSA_ECOK1</name>
<dbReference type="EC" id="2.5.1.55" evidence="1"/>
<dbReference type="EMBL" id="CP000468">
    <property type="protein sequence ID" value="ABJ00632.1"/>
    <property type="molecule type" value="Genomic_DNA"/>
</dbReference>
<dbReference type="RefSeq" id="WP_000811065.1">
    <property type="nucleotide sequence ID" value="NZ_CADILS010000001.1"/>
</dbReference>
<dbReference type="SMR" id="A1AAE2"/>
<dbReference type="GeneID" id="75203328"/>
<dbReference type="KEGG" id="ecv:APECO1_332"/>
<dbReference type="HOGENOM" id="CLU_036666_0_0_6"/>
<dbReference type="UniPathway" id="UPA00030"/>
<dbReference type="UniPathway" id="UPA00357">
    <property type="reaction ID" value="UER00474"/>
</dbReference>
<dbReference type="Proteomes" id="UP000008216">
    <property type="component" value="Chromosome"/>
</dbReference>
<dbReference type="GO" id="GO:0005737">
    <property type="term" value="C:cytoplasm"/>
    <property type="evidence" value="ECO:0007669"/>
    <property type="project" value="UniProtKB-SubCell"/>
</dbReference>
<dbReference type="GO" id="GO:0008676">
    <property type="term" value="F:3-deoxy-8-phosphooctulonate synthase activity"/>
    <property type="evidence" value="ECO:0007669"/>
    <property type="project" value="UniProtKB-UniRule"/>
</dbReference>
<dbReference type="GO" id="GO:0019294">
    <property type="term" value="P:keto-3-deoxy-D-manno-octulosonic acid biosynthetic process"/>
    <property type="evidence" value="ECO:0007669"/>
    <property type="project" value="UniProtKB-UniRule"/>
</dbReference>
<dbReference type="FunFam" id="3.20.20.70:FF:000058">
    <property type="entry name" value="2-dehydro-3-deoxyphosphooctonate aldolase"/>
    <property type="match status" value="1"/>
</dbReference>
<dbReference type="Gene3D" id="3.20.20.70">
    <property type="entry name" value="Aldolase class I"/>
    <property type="match status" value="1"/>
</dbReference>
<dbReference type="HAMAP" id="MF_00056">
    <property type="entry name" value="KDO8P_synth"/>
    <property type="match status" value="1"/>
</dbReference>
<dbReference type="InterPro" id="IPR013785">
    <property type="entry name" value="Aldolase_TIM"/>
</dbReference>
<dbReference type="InterPro" id="IPR006218">
    <property type="entry name" value="DAHP1/KDSA"/>
</dbReference>
<dbReference type="InterPro" id="IPR006269">
    <property type="entry name" value="KDO8P_synthase"/>
</dbReference>
<dbReference type="NCBIfam" id="TIGR01362">
    <property type="entry name" value="KDO8P_synth"/>
    <property type="match status" value="1"/>
</dbReference>
<dbReference type="NCBIfam" id="NF003543">
    <property type="entry name" value="PRK05198.1"/>
    <property type="match status" value="1"/>
</dbReference>
<dbReference type="NCBIfam" id="NF009109">
    <property type="entry name" value="PRK12457.1"/>
    <property type="match status" value="1"/>
</dbReference>
<dbReference type="PANTHER" id="PTHR21057">
    <property type="entry name" value="PHOSPHO-2-DEHYDRO-3-DEOXYHEPTONATE ALDOLASE"/>
    <property type="match status" value="1"/>
</dbReference>
<dbReference type="Pfam" id="PF00793">
    <property type="entry name" value="DAHP_synth_1"/>
    <property type="match status" value="1"/>
</dbReference>
<dbReference type="SUPFAM" id="SSF51569">
    <property type="entry name" value="Aldolase"/>
    <property type="match status" value="1"/>
</dbReference>
<accession>A1AAE2</accession>
<comment type="catalytic activity">
    <reaction evidence="1">
        <text>D-arabinose 5-phosphate + phosphoenolpyruvate + H2O = 3-deoxy-alpha-D-manno-2-octulosonate-8-phosphate + phosphate</text>
        <dbReference type="Rhea" id="RHEA:14053"/>
        <dbReference type="ChEBI" id="CHEBI:15377"/>
        <dbReference type="ChEBI" id="CHEBI:43474"/>
        <dbReference type="ChEBI" id="CHEBI:57693"/>
        <dbReference type="ChEBI" id="CHEBI:58702"/>
        <dbReference type="ChEBI" id="CHEBI:85985"/>
        <dbReference type="EC" id="2.5.1.55"/>
    </reaction>
</comment>
<comment type="pathway">
    <text evidence="1">Carbohydrate biosynthesis; 3-deoxy-D-manno-octulosonate biosynthesis; 3-deoxy-D-manno-octulosonate from D-ribulose 5-phosphate: step 2/3.</text>
</comment>
<comment type="pathway">
    <text evidence="1">Bacterial outer membrane biogenesis; lipopolysaccharide biosynthesis.</text>
</comment>
<comment type="subcellular location">
    <subcellularLocation>
        <location evidence="1">Cytoplasm</location>
    </subcellularLocation>
</comment>
<comment type="similarity">
    <text evidence="1">Belongs to the KdsA family.</text>
</comment>
<sequence length="284" mass="30833">MKQKVVSIGDINVANDLPFVLFGGMNVLESRDLAMRICEHYVTVTQKLGIPYVFKASFDKANRSSIHSYRGPGLEEGMKIFQELKQTFGVKIITDVHEPSQAQPVADVVDVIQLPAFLARQTDLVEAMAKTGAVINVKKPQFVSPGQMGNIVDKFKEGGNEKVILCDRGANFGYDNLVVDMLGFSIMKKVSGNSPVIFDVTHALQCRDPFGAASGGRRAQVAELARAGMAVGLAGLFIEAHPDPEHAKCDGPSALPLAKLEPFLKQMKAIDDLVKGFEELDTSK</sequence>